<comment type="subcellular location">
    <subcellularLocation>
        <location evidence="1">Mitochondrion membrane</location>
        <topology evidence="1">Single-pass membrane protein</topology>
    </subcellularLocation>
</comment>
<comment type="similarity">
    <text evidence="3">Belongs to the AIM36 family.</text>
</comment>
<reference key="1">
    <citation type="journal article" date="2009" name="Genome Res.">
        <title>Comparative genomics of protoploid Saccharomycetaceae.</title>
        <authorList>
            <consortium name="The Genolevures Consortium"/>
            <person name="Souciet J.-L."/>
            <person name="Dujon B."/>
            <person name="Gaillardin C."/>
            <person name="Johnston M."/>
            <person name="Baret P.V."/>
            <person name="Cliften P."/>
            <person name="Sherman D.J."/>
            <person name="Weissenbach J."/>
            <person name="Westhof E."/>
            <person name="Wincker P."/>
            <person name="Jubin C."/>
            <person name="Poulain J."/>
            <person name="Barbe V."/>
            <person name="Segurens B."/>
            <person name="Artiguenave F."/>
            <person name="Anthouard V."/>
            <person name="Vacherie B."/>
            <person name="Val M.-E."/>
            <person name="Fulton R.S."/>
            <person name="Minx P."/>
            <person name="Wilson R."/>
            <person name="Durrens P."/>
            <person name="Jean G."/>
            <person name="Marck C."/>
            <person name="Martin T."/>
            <person name="Nikolski M."/>
            <person name="Rolland T."/>
            <person name="Seret M.-L."/>
            <person name="Casaregola S."/>
            <person name="Despons L."/>
            <person name="Fairhead C."/>
            <person name="Fischer G."/>
            <person name="Lafontaine I."/>
            <person name="Leh V."/>
            <person name="Lemaire M."/>
            <person name="de Montigny J."/>
            <person name="Neuveglise C."/>
            <person name="Thierry A."/>
            <person name="Blanc-Lenfle I."/>
            <person name="Bleykasten C."/>
            <person name="Diffels J."/>
            <person name="Fritsch E."/>
            <person name="Frangeul L."/>
            <person name="Goeffon A."/>
            <person name="Jauniaux N."/>
            <person name="Kachouri-Lafond R."/>
            <person name="Payen C."/>
            <person name="Potier S."/>
            <person name="Pribylova L."/>
            <person name="Ozanne C."/>
            <person name="Richard G.-F."/>
            <person name="Sacerdot C."/>
            <person name="Straub M.-L."/>
            <person name="Talla E."/>
        </authorList>
    </citation>
    <scope>NUCLEOTIDE SEQUENCE [LARGE SCALE GENOMIC DNA]</scope>
    <source>
        <strain>ATCC 56472 / CBS 6340 / NRRL Y-8284</strain>
    </source>
</reference>
<feature type="transit peptide" description="Mitochondrion" evidence="2">
    <location>
        <begin position="1"/>
        <end position="35"/>
    </location>
</feature>
<feature type="chain" id="PRO_0000399727" description="Altered inheritance of mitochondria protein 36, mitochondrial">
    <location>
        <begin position="36"/>
        <end position="227"/>
    </location>
</feature>
<feature type="transmembrane region" description="Helical" evidence="2">
    <location>
        <begin position="41"/>
        <end position="57"/>
    </location>
</feature>
<gene>
    <name type="primary">AIM36</name>
    <name type="synonym">FMP39</name>
    <name type="ordered locus">KLTH0F10164g</name>
</gene>
<sequence>MLPVRSARNWLTLRNSWLLLRNAGRRSFYSTKPKAPRKDELPSFTKIALVGVVGTIIFAEAVKSLDKNQPKNSYSESEYAEVVKNMKRRKVMFSPGELKVQIAVQGVNPGNFHDRGRIVEPFEVAETYRKMDNDRYQPLLNDLRDTYGDQYVQNLPQGLLVMLIGRYLKDTCQKGDSVLVVDFPLDMSDAIKFENEISVVDKVLFNSPEADSDLAKYYQTVNKVEIL</sequence>
<organism>
    <name type="scientific">Lachancea thermotolerans (strain ATCC 56472 / CBS 6340 / NRRL Y-8284)</name>
    <name type="common">Yeast</name>
    <name type="synonym">Kluyveromyces thermotolerans</name>
    <dbReference type="NCBI Taxonomy" id="559295"/>
    <lineage>
        <taxon>Eukaryota</taxon>
        <taxon>Fungi</taxon>
        <taxon>Dikarya</taxon>
        <taxon>Ascomycota</taxon>
        <taxon>Saccharomycotina</taxon>
        <taxon>Saccharomycetes</taxon>
        <taxon>Saccharomycetales</taxon>
        <taxon>Saccharomycetaceae</taxon>
        <taxon>Lachancea</taxon>
    </lineage>
</organism>
<name>AIM36_LACTC</name>
<dbReference type="EMBL" id="CU928170">
    <property type="protein sequence ID" value="CAR24207.1"/>
    <property type="molecule type" value="Genomic_DNA"/>
</dbReference>
<dbReference type="RefSeq" id="XP_002554644.1">
    <property type="nucleotide sequence ID" value="XM_002554598.1"/>
</dbReference>
<dbReference type="SMR" id="C5DL56"/>
<dbReference type="FunCoup" id="C5DL56">
    <property type="interactions" value="28"/>
</dbReference>
<dbReference type="GeneID" id="8292854"/>
<dbReference type="KEGG" id="lth:KLTH0F10164g"/>
<dbReference type="eggNOG" id="ENOG502S2G9">
    <property type="taxonomic scope" value="Eukaryota"/>
</dbReference>
<dbReference type="HOGENOM" id="CLU_090420_0_0_1"/>
<dbReference type="InParanoid" id="C5DL56"/>
<dbReference type="OMA" id="RVAIFPQ"/>
<dbReference type="OrthoDB" id="4081130at2759"/>
<dbReference type="Proteomes" id="UP000002036">
    <property type="component" value="Chromosome F"/>
</dbReference>
<dbReference type="GO" id="GO:0031966">
    <property type="term" value="C:mitochondrial membrane"/>
    <property type="evidence" value="ECO:0007669"/>
    <property type="project" value="UniProtKB-SubCell"/>
</dbReference>
<keyword id="KW-0472">Membrane</keyword>
<keyword id="KW-0496">Mitochondrion</keyword>
<keyword id="KW-1185">Reference proteome</keyword>
<keyword id="KW-0809">Transit peptide</keyword>
<keyword id="KW-0812">Transmembrane</keyword>
<keyword id="KW-1133">Transmembrane helix</keyword>
<proteinExistence type="inferred from homology"/>
<protein>
    <recommendedName>
        <fullName>Altered inheritance of mitochondria protein 36, mitochondrial</fullName>
    </recommendedName>
    <alternativeName>
        <fullName>Found in mitochondria protein 39</fullName>
    </alternativeName>
</protein>
<accession>C5DL56</accession>
<evidence type="ECO:0000250" key="1"/>
<evidence type="ECO:0000255" key="2"/>
<evidence type="ECO:0000305" key="3"/>